<proteinExistence type="inferred from homology"/>
<gene>
    <name type="primary">Grb10</name>
</gene>
<comment type="function">
    <text evidence="1">Adapter protein which modulates coupling of a number of cell surface receptor kinases with specific signaling pathways. Binds to, and suppress signals from, activated receptors tyrosine kinases, including the insulin (INSR) and insulin-like growth factor (IGF1R) receptors. The inhibitory effect can be achieved by 2 mechanisms: interference with the signaling pathway and increased receptor degradation. Delays and reduces AKT1 phosphorylation in response to insulin stimulation. Blocks association between INSR and IRS1 and IRS2 and prevents insulin-stimulated IRS1 and IRS2 tyrosine phosphorylation. Recruits NEDD4 to IGF1R, leading to IGF1R ubiquitination, increased internalization and degradation by both the proteasomal and lysosomal pathways. A similar role in the mediation of ubiquitination also has been suggested with INSR. Negatively regulates Wnt signaling by interacting with LRP6 intracellular portion and interfering with the binding of AXIN1 to LRP6. Positive regulator of the KDR/VEGFR-2 signaling pathway. May inhibit NEDD4-mediated degradation of KDR/VEGFR-2 (By similarity).</text>
</comment>
<comment type="activity regulation">
    <text evidence="1">Phosphorylation by mTORC1 stabilizes and activates GRB10 constituting a feedback pathway by which mTORC1 inhibits INSR-dependent signaling.</text>
</comment>
<comment type="subunit">
    <text evidence="1">Interacts with ligand-activated tyrosine kinase receptors, including FGFR1, INSR, IGF1R, MET and PDGFRB in a phosphotyrosine-dependent manner through the SH2 domain. Poorly binds to the EGFR. Directly interacts with MAP3K14/NIK and is recruited to the EGFR-ERBB2 complex. Interacts with GIGYF1/PERQ1 and GIGYF2/TNRC15. When unphosphorylated, interacts with AKT1 and when phosphorylated with YWHAE/14-3-3 epsilon. Interacts with NEDD4. Interacts with LRP6, thus interfering with the binding of AXIN1 to LRP6. Binds relatively non-specifically to several phosphoinositides, including PI(5)P, PI(4,5)P2, PI(3,4)P2 and PI(3,4,5)P3, with modest affinities through the PH domain. Binds to activated NRAS (By similarity).</text>
</comment>
<comment type="subcellular location">
    <subcellularLocation>
        <location evidence="1">Cytoplasm</location>
    </subcellularLocation>
    <text evidence="1">When complexed with NEDD4 and IGF1R, follows IGF1R internalization, remaining associated with early endosomes. Uncouples from IGF1R-containing endosomes before the sorting of the receptor to the lysosomal compartment (By similarity).</text>
</comment>
<comment type="PTM">
    <text evidence="1">Phosphorylated on serine residues upon EGF, FGF and PDGF stimulation.</text>
</comment>
<comment type="similarity">
    <text evidence="8">Belongs to the GRB7/10/14 family.</text>
</comment>
<comment type="sequence caution" evidence="8">
    <conflict type="erroneous initiation">
        <sequence resource="EMBL-CDS" id="EDL76070"/>
    </conflict>
</comment>
<reference key="1">
    <citation type="submission" date="2005-08" db="EMBL/GenBank/DDBJ databases">
        <authorList>
            <person name="Mural R.J."/>
            <person name="Adams M.D."/>
            <person name="Myers E.W."/>
            <person name="Smith H.O."/>
            <person name="Venter J.C."/>
        </authorList>
    </citation>
    <scope>NUCLEOTIDE SEQUENCE [LARGE SCALE GENOMIC DNA]</scope>
</reference>
<evidence type="ECO:0000250" key="1"/>
<evidence type="ECO:0000250" key="2">
    <source>
        <dbReference type="UniProtKB" id="Q13322"/>
    </source>
</evidence>
<evidence type="ECO:0000250" key="3">
    <source>
        <dbReference type="UniProtKB" id="Q60760"/>
    </source>
</evidence>
<evidence type="ECO:0000255" key="4">
    <source>
        <dbReference type="PROSITE-ProRule" id="PRU00145"/>
    </source>
</evidence>
<evidence type="ECO:0000255" key="5">
    <source>
        <dbReference type="PROSITE-ProRule" id="PRU00166"/>
    </source>
</evidence>
<evidence type="ECO:0000255" key="6">
    <source>
        <dbReference type="PROSITE-ProRule" id="PRU00191"/>
    </source>
</evidence>
<evidence type="ECO:0000256" key="7">
    <source>
        <dbReference type="SAM" id="MobiDB-lite"/>
    </source>
</evidence>
<evidence type="ECO:0000305" key="8"/>
<protein>
    <recommendedName>
        <fullName>Growth factor receptor-bound protein 10</fullName>
    </recommendedName>
    <alternativeName>
        <fullName>GRB10 adapter protein</fullName>
    </alternativeName>
</protein>
<feature type="chain" id="PRO_0000392072" description="Growth factor receptor-bound protein 10">
    <location>
        <begin position="1"/>
        <end position="599"/>
    </location>
</feature>
<feature type="domain" description="Ras-associating" evidence="5">
    <location>
        <begin position="171"/>
        <end position="255"/>
    </location>
</feature>
<feature type="domain" description="PH" evidence="4">
    <location>
        <begin position="295"/>
        <end position="404"/>
    </location>
</feature>
<feature type="domain" description="SH2" evidence="6">
    <location>
        <begin position="498"/>
        <end position="594"/>
    </location>
</feature>
<feature type="region of interest" description="Disordered" evidence="7">
    <location>
        <begin position="1"/>
        <end position="122"/>
    </location>
</feature>
<feature type="compositionally biased region" description="Polar residues" evidence="7">
    <location>
        <begin position="1"/>
        <end position="23"/>
    </location>
</feature>
<feature type="compositionally biased region" description="Low complexity" evidence="7">
    <location>
        <begin position="32"/>
        <end position="43"/>
    </location>
</feature>
<feature type="compositionally biased region" description="Polar residues" evidence="7">
    <location>
        <begin position="44"/>
        <end position="61"/>
    </location>
</feature>
<feature type="compositionally biased region" description="Pro residues" evidence="7">
    <location>
        <begin position="97"/>
        <end position="118"/>
    </location>
</feature>
<feature type="modified residue" description="Phosphoserine" evidence="2">
    <location>
        <position position="50"/>
    </location>
</feature>
<feature type="modified residue" description="Phosphoserine; by MTOR, MAPK1 and MAPK3" evidence="2">
    <location>
        <position position="98"/>
    </location>
</feature>
<feature type="modified residue" description="Phosphoserine; by MTOR and PKB/AKT1" evidence="2">
    <location>
        <position position="433"/>
    </location>
</feature>
<feature type="modified residue" description="Phosphoserine" evidence="3">
    <location>
        <position position="436"/>
    </location>
</feature>
<feature type="modified residue" description="Phosphoserine; by MTOR, MAPK1 and MAPK3" evidence="2">
    <location>
        <position position="481"/>
    </location>
</feature>
<keyword id="KW-0963">Cytoplasm</keyword>
<keyword id="KW-0597">Phosphoprotein</keyword>
<keyword id="KW-1185">Reference proteome</keyword>
<keyword id="KW-0727">SH2 domain</keyword>
<dbReference type="EMBL" id="CH474055">
    <property type="protein sequence ID" value="EDL76070.1"/>
    <property type="status" value="ALT_INIT"/>
    <property type="molecule type" value="Genomic_DNA"/>
</dbReference>
<dbReference type="RefSeq" id="NP_001388332.1">
    <property type="nucleotide sequence ID" value="NM_001401403.1"/>
</dbReference>
<dbReference type="RefSeq" id="XP_017454822.1">
    <property type="nucleotide sequence ID" value="XM_017599333.1"/>
</dbReference>
<dbReference type="RefSeq" id="XP_038948243.1">
    <property type="nucleotide sequence ID" value="XM_039092315.2"/>
</dbReference>
<dbReference type="RefSeq" id="XP_038948244.1">
    <property type="nucleotide sequence ID" value="XM_039092316.2"/>
</dbReference>
<dbReference type="RefSeq" id="XP_038948245.1">
    <property type="nucleotide sequence ID" value="XM_039092317.2"/>
</dbReference>
<dbReference type="RefSeq" id="XP_063129557.1">
    <property type="nucleotide sequence ID" value="XM_063273487.1"/>
</dbReference>
<dbReference type="RefSeq" id="XP_063129558.1">
    <property type="nucleotide sequence ID" value="XM_063273488.1"/>
</dbReference>
<dbReference type="SMR" id="P0CE43"/>
<dbReference type="FunCoup" id="P0CE43">
    <property type="interactions" value="1476"/>
</dbReference>
<dbReference type="IntAct" id="P0CE43">
    <property type="interactions" value="4"/>
</dbReference>
<dbReference type="STRING" id="10116.ENSRNOP00000070674"/>
<dbReference type="iPTMnet" id="P0CE43"/>
<dbReference type="PhosphoSitePlus" id="P0CE43"/>
<dbReference type="PaxDb" id="10116-ENSRNOP00000048487"/>
<dbReference type="GeneID" id="498416"/>
<dbReference type="UCSC" id="RGD:1566234">
    <property type="organism name" value="rat"/>
</dbReference>
<dbReference type="AGR" id="RGD:1566234"/>
<dbReference type="RGD" id="1566234">
    <property type="gene designation" value="Grb10"/>
</dbReference>
<dbReference type="eggNOG" id="KOG3751">
    <property type="taxonomic scope" value="Eukaryota"/>
</dbReference>
<dbReference type="InParanoid" id="P0CE43"/>
<dbReference type="PhylomeDB" id="P0CE43"/>
<dbReference type="Reactome" id="R-RNO-1433557">
    <property type="pathway name" value="Signaling by SCF-KIT"/>
</dbReference>
<dbReference type="Reactome" id="R-RNO-74713">
    <property type="pathway name" value="IRS activation"/>
</dbReference>
<dbReference type="Reactome" id="R-RNO-74749">
    <property type="pathway name" value="Signal attenuation"/>
</dbReference>
<dbReference type="Reactome" id="R-RNO-74751">
    <property type="pathway name" value="Insulin receptor signalling cascade"/>
</dbReference>
<dbReference type="Reactome" id="R-RNO-8853659">
    <property type="pathway name" value="RET signaling"/>
</dbReference>
<dbReference type="Reactome" id="R-RNO-9607240">
    <property type="pathway name" value="FLT3 Signaling"/>
</dbReference>
<dbReference type="PRO" id="PR:P0CE43"/>
<dbReference type="Proteomes" id="UP000002494">
    <property type="component" value="Unplaced"/>
</dbReference>
<dbReference type="Proteomes" id="UP000234681">
    <property type="component" value="Chromosome 14"/>
</dbReference>
<dbReference type="GO" id="GO:0005737">
    <property type="term" value="C:cytoplasm"/>
    <property type="evidence" value="ECO:0007669"/>
    <property type="project" value="UniProtKB-SubCell"/>
</dbReference>
<dbReference type="GO" id="GO:0032991">
    <property type="term" value="C:protein-containing complex"/>
    <property type="evidence" value="ECO:0000266"/>
    <property type="project" value="RGD"/>
</dbReference>
<dbReference type="GO" id="GO:0005158">
    <property type="term" value="F:insulin receptor binding"/>
    <property type="evidence" value="ECO:0000314"/>
    <property type="project" value="BHF-UCL"/>
</dbReference>
<dbReference type="GO" id="GO:0030674">
    <property type="term" value="F:protein-macromolecule adaptor activity"/>
    <property type="evidence" value="ECO:0000266"/>
    <property type="project" value="RGD"/>
</dbReference>
<dbReference type="GO" id="GO:0030159">
    <property type="term" value="F:signaling receptor complex adaptor activity"/>
    <property type="evidence" value="ECO:0000266"/>
    <property type="project" value="RGD"/>
</dbReference>
<dbReference type="GO" id="GO:0070371">
    <property type="term" value="P:ERK1 and ERK2 cascade"/>
    <property type="evidence" value="ECO:0000266"/>
    <property type="project" value="RGD"/>
</dbReference>
<dbReference type="GO" id="GO:0010467">
    <property type="term" value="P:gene expression"/>
    <property type="evidence" value="ECO:0000266"/>
    <property type="project" value="RGD"/>
</dbReference>
<dbReference type="GO" id="GO:0008286">
    <property type="term" value="P:insulin receptor signaling pathway"/>
    <property type="evidence" value="ECO:0000314"/>
    <property type="project" value="BHF-UCL"/>
</dbReference>
<dbReference type="GO" id="GO:0048009">
    <property type="term" value="P:insulin-like growth factor receptor signaling pathway"/>
    <property type="evidence" value="ECO:0000266"/>
    <property type="project" value="RGD"/>
</dbReference>
<dbReference type="GO" id="GO:0046325">
    <property type="term" value="P:negative regulation of D-glucose import"/>
    <property type="evidence" value="ECO:0000266"/>
    <property type="project" value="RGD"/>
</dbReference>
<dbReference type="GO" id="GO:0045719">
    <property type="term" value="P:negative regulation of glycogen biosynthetic process"/>
    <property type="evidence" value="ECO:0000314"/>
    <property type="project" value="BHF-UCL"/>
</dbReference>
<dbReference type="GO" id="GO:0046627">
    <property type="term" value="P:negative regulation of insulin receptor signaling pathway"/>
    <property type="evidence" value="ECO:0000266"/>
    <property type="project" value="RGD"/>
</dbReference>
<dbReference type="GO" id="GO:0030178">
    <property type="term" value="P:negative regulation of Wnt signaling pathway"/>
    <property type="evidence" value="ECO:0000250"/>
    <property type="project" value="UniProtKB"/>
</dbReference>
<dbReference type="GO" id="GO:0120162">
    <property type="term" value="P:positive regulation of cold-induced thermogenesis"/>
    <property type="evidence" value="ECO:0000250"/>
    <property type="project" value="YuBioLab"/>
</dbReference>
<dbReference type="GO" id="GO:0042327">
    <property type="term" value="P:positive regulation of phosphorylation"/>
    <property type="evidence" value="ECO:0000314"/>
    <property type="project" value="BHF-UCL"/>
</dbReference>
<dbReference type="GO" id="GO:0030949">
    <property type="term" value="P:positive regulation of vascular endothelial growth factor receptor signaling pathway"/>
    <property type="evidence" value="ECO:0000250"/>
    <property type="project" value="UniProtKB"/>
</dbReference>
<dbReference type="GO" id="GO:0032868">
    <property type="term" value="P:response to insulin"/>
    <property type="evidence" value="ECO:0000314"/>
    <property type="project" value="BHF-UCL"/>
</dbReference>
<dbReference type="GO" id="GO:1904738">
    <property type="term" value="P:vascular associated smooth muscle cell migration"/>
    <property type="evidence" value="ECO:0000266"/>
    <property type="project" value="RGD"/>
</dbReference>
<dbReference type="CDD" id="cd01259">
    <property type="entry name" value="PH_APBB1IP"/>
    <property type="match status" value="1"/>
</dbReference>
<dbReference type="CDD" id="cd16141">
    <property type="entry name" value="RA_GRB10"/>
    <property type="match status" value="1"/>
</dbReference>
<dbReference type="CDD" id="cd10415">
    <property type="entry name" value="SH2_Grb10"/>
    <property type="match status" value="1"/>
</dbReference>
<dbReference type="FunFam" id="3.30.505.10:FF:000015">
    <property type="entry name" value="Growth factor receptor-bound protein 10 isoform X1"/>
    <property type="match status" value="1"/>
</dbReference>
<dbReference type="FunFam" id="2.30.29.30:FF:000062">
    <property type="entry name" value="growth factor receptor-bound protein 10 isoform X1"/>
    <property type="match status" value="1"/>
</dbReference>
<dbReference type="FunFam" id="3.10.20.90:FF:000056">
    <property type="entry name" value="growth factor receptor-bound protein 10 isoform X1"/>
    <property type="match status" value="1"/>
</dbReference>
<dbReference type="Gene3D" id="3.10.20.90">
    <property type="entry name" value="Phosphatidylinositol 3-kinase Catalytic Subunit, Chain A, domain 1"/>
    <property type="match status" value="1"/>
</dbReference>
<dbReference type="Gene3D" id="2.30.29.30">
    <property type="entry name" value="Pleckstrin-homology domain (PH domain)/Phosphotyrosine-binding domain (PTB)"/>
    <property type="match status" value="1"/>
</dbReference>
<dbReference type="Gene3D" id="3.30.505.10">
    <property type="entry name" value="SH2 domain"/>
    <property type="match status" value="1"/>
</dbReference>
<dbReference type="InterPro" id="IPR015042">
    <property type="entry name" value="BPS-dom"/>
</dbReference>
<dbReference type="InterPro" id="IPR039664">
    <property type="entry name" value="GRB/APBB1IP"/>
</dbReference>
<dbReference type="InterPro" id="IPR035037">
    <property type="entry name" value="Grb10_SH2"/>
</dbReference>
<dbReference type="InterPro" id="IPR011993">
    <property type="entry name" value="PH-like_dom_sf"/>
</dbReference>
<dbReference type="InterPro" id="IPR039665">
    <property type="entry name" value="PH_APBB1IP"/>
</dbReference>
<dbReference type="InterPro" id="IPR001849">
    <property type="entry name" value="PH_domain"/>
</dbReference>
<dbReference type="InterPro" id="IPR000159">
    <property type="entry name" value="RA_dom"/>
</dbReference>
<dbReference type="InterPro" id="IPR000980">
    <property type="entry name" value="SH2"/>
</dbReference>
<dbReference type="InterPro" id="IPR036860">
    <property type="entry name" value="SH2_dom_sf"/>
</dbReference>
<dbReference type="InterPro" id="IPR029071">
    <property type="entry name" value="Ubiquitin-like_domsf"/>
</dbReference>
<dbReference type="PANTHER" id="PTHR11243">
    <property type="entry name" value="GROWTH FACTOR RECEPTOR-BOUND PROTEIN"/>
    <property type="match status" value="1"/>
</dbReference>
<dbReference type="PANTHER" id="PTHR11243:SF4">
    <property type="entry name" value="GROWTH FACTOR RECEPTOR-BOUND PROTEIN 10"/>
    <property type="match status" value="1"/>
</dbReference>
<dbReference type="Pfam" id="PF08947">
    <property type="entry name" value="BPS"/>
    <property type="match status" value="1"/>
</dbReference>
<dbReference type="Pfam" id="PF00169">
    <property type="entry name" value="PH"/>
    <property type="match status" value="1"/>
</dbReference>
<dbReference type="Pfam" id="PF21989">
    <property type="entry name" value="RA_2"/>
    <property type="match status" value="1"/>
</dbReference>
<dbReference type="Pfam" id="PF00017">
    <property type="entry name" value="SH2"/>
    <property type="match status" value="1"/>
</dbReference>
<dbReference type="PRINTS" id="PR00401">
    <property type="entry name" value="SH2DOMAIN"/>
</dbReference>
<dbReference type="SMART" id="SM00233">
    <property type="entry name" value="PH"/>
    <property type="match status" value="1"/>
</dbReference>
<dbReference type="SMART" id="SM00314">
    <property type="entry name" value="RA"/>
    <property type="match status" value="1"/>
</dbReference>
<dbReference type="SMART" id="SM00252">
    <property type="entry name" value="SH2"/>
    <property type="match status" value="1"/>
</dbReference>
<dbReference type="SUPFAM" id="SSF50729">
    <property type="entry name" value="PH domain-like"/>
    <property type="match status" value="1"/>
</dbReference>
<dbReference type="SUPFAM" id="SSF55550">
    <property type="entry name" value="SH2 domain"/>
    <property type="match status" value="1"/>
</dbReference>
<dbReference type="SUPFAM" id="SSF54236">
    <property type="entry name" value="Ubiquitin-like"/>
    <property type="match status" value="1"/>
</dbReference>
<dbReference type="PROSITE" id="PS50003">
    <property type="entry name" value="PH_DOMAIN"/>
    <property type="match status" value="1"/>
</dbReference>
<dbReference type="PROSITE" id="PS50200">
    <property type="entry name" value="RA"/>
    <property type="match status" value="1"/>
</dbReference>
<dbReference type="PROSITE" id="PS50001">
    <property type="entry name" value="SH2"/>
    <property type="match status" value="1"/>
</dbReference>
<sequence>MNNDINSSVESLNSACNMQSDTDTVPLLENGQSASNQPSASSSRGQPQASPRQKMQRSQPVHIQPLRRLQEEDQQLRTSSLPAIPNPFPELAGGAPGSPPSVAPSSLPPPPSQPPAKHFPPGFQLAKLTRPGLWTKTTARFSKRQPKNQCQTDTANAVSRIPTSQMEKLRLRKDVKVFSEDGTSKVVEILTDMTARDLCQLLVYKSHCVDDNSWTLVEHHPQLGLERCLEDHEIVVQVESTMPSESKFLFRKNYAKYEFFKNPVNFFPDQMVTWCQQSNGGQAQLLQNFLNSSSCPEIQGFLQVKEVGRKSWKKLYVCLRRSGLYYSTKGTSKEPRHLQLLADLEESSIFYLIAGKKQYNAPNEHGMCIKPNKAKIEMKELRLLCAEDEQIRTCWMTAFRLLKYGMLLYQNYRIPQQRKGLAPPFNAPMRSVSENSLVAMDFSGQIGRVIDNPAEAQSAALEEGHAWRKRSTRMNILSSQSPLHPSTLNSVIHRTQHWFHGRISREESHRIIKQQGLVDGLFLLRDSQSNPKAFVLTLCHQQKIRNFQILPCEDDGQTFFTLDDGNTKFSDLIQLVDFYQLNKGVLPCKLKHHCIRVAL</sequence>
<name>GRB10_RAT</name>
<accession>P0CE43</accession>
<organism>
    <name type="scientific">Rattus norvegicus</name>
    <name type="common">Rat</name>
    <dbReference type="NCBI Taxonomy" id="10116"/>
    <lineage>
        <taxon>Eukaryota</taxon>
        <taxon>Metazoa</taxon>
        <taxon>Chordata</taxon>
        <taxon>Craniata</taxon>
        <taxon>Vertebrata</taxon>
        <taxon>Euteleostomi</taxon>
        <taxon>Mammalia</taxon>
        <taxon>Eutheria</taxon>
        <taxon>Euarchontoglires</taxon>
        <taxon>Glires</taxon>
        <taxon>Rodentia</taxon>
        <taxon>Myomorpha</taxon>
        <taxon>Muroidea</taxon>
        <taxon>Muridae</taxon>
        <taxon>Murinae</taxon>
        <taxon>Rattus</taxon>
    </lineage>
</organism>